<organism>
    <name type="scientific">Brucella abortus biovar 1 (strain 9-941)</name>
    <dbReference type="NCBI Taxonomy" id="262698"/>
    <lineage>
        <taxon>Bacteria</taxon>
        <taxon>Pseudomonadati</taxon>
        <taxon>Pseudomonadota</taxon>
        <taxon>Alphaproteobacteria</taxon>
        <taxon>Hyphomicrobiales</taxon>
        <taxon>Brucellaceae</taxon>
        <taxon>Brucella/Ochrobactrum group</taxon>
        <taxon>Brucella</taxon>
    </lineage>
</organism>
<comment type="function">
    <text evidence="1">Modifies, by uridylylation and deuridylylation, the PII regulatory proteins (GlnB and homologs), in response to the nitrogen status of the cell that GlnD senses through the glutamine level. Under low glutamine levels, catalyzes the conversion of the PII proteins and UTP to PII-UMP and PPi, while under higher glutamine levels, GlnD hydrolyzes PII-UMP to PII and UMP (deuridylylation). Thus, controls uridylylation state and activity of the PII proteins, and plays an important role in the regulation of nitrogen assimilation and metabolism.</text>
</comment>
<comment type="catalytic activity">
    <reaction evidence="1">
        <text>[protein-PII]-L-tyrosine + UTP = [protein-PII]-uridylyl-L-tyrosine + diphosphate</text>
        <dbReference type="Rhea" id="RHEA:13673"/>
        <dbReference type="Rhea" id="RHEA-COMP:12147"/>
        <dbReference type="Rhea" id="RHEA-COMP:12148"/>
        <dbReference type="ChEBI" id="CHEBI:33019"/>
        <dbReference type="ChEBI" id="CHEBI:46398"/>
        <dbReference type="ChEBI" id="CHEBI:46858"/>
        <dbReference type="ChEBI" id="CHEBI:90602"/>
        <dbReference type="EC" id="2.7.7.59"/>
    </reaction>
</comment>
<comment type="catalytic activity">
    <reaction evidence="1">
        <text>[protein-PII]-uridylyl-L-tyrosine + H2O = [protein-PII]-L-tyrosine + UMP + H(+)</text>
        <dbReference type="Rhea" id="RHEA:48600"/>
        <dbReference type="Rhea" id="RHEA-COMP:12147"/>
        <dbReference type="Rhea" id="RHEA-COMP:12148"/>
        <dbReference type="ChEBI" id="CHEBI:15377"/>
        <dbReference type="ChEBI" id="CHEBI:15378"/>
        <dbReference type="ChEBI" id="CHEBI:46858"/>
        <dbReference type="ChEBI" id="CHEBI:57865"/>
        <dbReference type="ChEBI" id="CHEBI:90602"/>
    </reaction>
</comment>
<comment type="cofactor">
    <cofactor evidence="1">
        <name>Mg(2+)</name>
        <dbReference type="ChEBI" id="CHEBI:18420"/>
    </cofactor>
</comment>
<comment type="activity regulation">
    <text evidence="1">Uridylyltransferase (UTase) activity is inhibited by glutamine, while glutamine activates uridylyl-removing (UR) activity.</text>
</comment>
<comment type="domain">
    <text evidence="1">Has four distinct domains: an N-terminal nucleotidyltransferase (NT) domain responsible for UTase activity, a central HD domain that encodes UR activity, and two C-terminal ACT domains that seem to have a role in glutamine sensing.</text>
</comment>
<comment type="similarity">
    <text evidence="1">Belongs to the GlnD family.</text>
</comment>
<keyword id="KW-0378">Hydrolase</keyword>
<keyword id="KW-0460">Magnesium</keyword>
<keyword id="KW-0511">Multifunctional enzyme</keyword>
<keyword id="KW-0548">Nucleotidyltransferase</keyword>
<keyword id="KW-0677">Repeat</keyword>
<keyword id="KW-0808">Transferase</keyword>
<protein>
    <recommendedName>
        <fullName evidence="1">Bifunctional uridylyltransferase/uridylyl-removing enzyme</fullName>
        <shortName evidence="1">UTase/UR</shortName>
    </recommendedName>
    <alternativeName>
        <fullName evidence="1">Bifunctional [protein-PII] modification enzyme</fullName>
    </alternativeName>
    <alternativeName>
        <fullName evidence="1">Bifunctional nitrogen sensor protein</fullName>
    </alternativeName>
    <domain>
        <recommendedName>
            <fullName evidence="1">[Protein-PII] uridylyltransferase</fullName>
            <shortName evidence="1">PII uridylyltransferase</shortName>
            <shortName evidence="1">UTase</shortName>
            <ecNumber evidence="1">2.7.7.59</ecNumber>
        </recommendedName>
    </domain>
    <domain>
        <recommendedName>
            <fullName evidence="1">[Protein-PII]-UMP uridylyl-removing enzyme</fullName>
            <shortName evidence="1">UR</shortName>
            <ecNumber evidence="1">3.1.4.-</ecNumber>
        </recommendedName>
    </domain>
</protein>
<gene>
    <name evidence="1" type="primary">glnD</name>
    <name type="ordered locus">BruAb1_0141</name>
</gene>
<reference key="1">
    <citation type="journal article" date="2005" name="J. Bacteriol.">
        <title>Completion of the genome sequence of Brucella abortus and comparison to the highly similar genomes of Brucella melitensis and Brucella suis.</title>
        <authorList>
            <person name="Halling S.M."/>
            <person name="Peterson-Burch B.D."/>
            <person name="Bricker B.J."/>
            <person name="Zuerner R.L."/>
            <person name="Qing Z."/>
            <person name="Li L.-L."/>
            <person name="Kapur V."/>
            <person name="Alt D.P."/>
            <person name="Olsen S.C."/>
        </authorList>
    </citation>
    <scope>NUCLEOTIDE SEQUENCE [LARGE SCALE GENOMIC DNA]</scope>
    <source>
        <strain>9-941</strain>
    </source>
</reference>
<feature type="chain" id="PRO_0000192722" description="Bifunctional uridylyltransferase/uridylyl-removing enzyme">
    <location>
        <begin position="1"/>
        <end position="934"/>
    </location>
</feature>
<feature type="domain" description="HD" evidence="2">
    <location>
        <begin position="496"/>
        <end position="613"/>
    </location>
</feature>
<feature type="domain" description="ACT 1" evidence="1">
    <location>
        <begin position="737"/>
        <end position="818"/>
    </location>
</feature>
<feature type="domain" description="ACT 2" evidence="1">
    <location>
        <begin position="848"/>
        <end position="931"/>
    </location>
</feature>
<feature type="region of interest" description="Uridylyltransferase">
    <location>
        <begin position="1"/>
        <end position="379"/>
    </location>
</feature>
<feature type="region of interest" description="Uridylyl-removing">
    <location>
        <begin position="380"/>
        <end position="736"/>
    </location>
</feature>
<proteinExistence type="inferred from homology"/>
<name>GLND_BRUAB</name>
<dbReference type="EC" id="2.7.7.59" evidence="1"/>
<dbReference type="EC" id="3.1.4.-" evidence="1"/>
<dbReference type="EMBL" id="AE017223">
    <property type="protein sequence ID" value="AAX73554.1"/>
    <property type="molecule type" value="Genomic_DNA"/>
</dbReference>
<dbReference type="RefSeq" id="WP_002965392.1">
    <property type="nucleotide sequence ID" value="NC_006932.1"/>
</dbReference>
<dbReference type="SMR" id="Q57FN0"/>
<dbReference type="EnsemblBacteria" id="AAX73554">
    <property type="protein sequence ID" value="AAX73554"/>
    <property type="gene ID" value="BruAb1_0141"/>
</dbReference>
<dbReference type="KEGG" id="bmb:BruAb1_0141"/>
<dbReference type="HOGENOM" id="CLU_012833_1_0_5"/>
<dbReference type="Proteomes" id="UP000000540">
    <property type="component" value="Chromosome I"/>
</dbReference>
<dbReference type="GO" id="GO:0008773">
    <property type="term" value="F:[protein-PII] uridylyltransferase activity"/>
    <property type="evidence" value="ECO:0007669"/>
    <property type="project" value="UniProtKB-UniRule"/>
</dbReference>
<dbReference type="GO" id="GO:0008081">
    <property type="term" value="F:phosphoric diester hydrolase activity"/>
    <property type="evidence" value="ECO:0007669"/>
    <property type="project" value="UniProtKB-UniRule"/>
</dbReference>
<dbReference type="GO" id="GO:0006808">
    <property type="term" value="P:regulation of nitrogen utilization"/>
    <property type="evidence" value="ECO:0007669"/>
    <property type="project" value="UniProtKB-UniRule"/>
</dbReference>
<dbReference type="CDD" id="cd04899">
    <property type="entry name" value="ACT_ACR-UUR-like_2"/>
    <property type="match status" value="1"/>
</dbReference>
<dbReference type="CDD" id="cd04900">
    <property type="entry name" value="ACT_UUR-like_1"/>
    <property type="match status" value="1"/>
</dbReference>
<dbReference type="CDD" id="cd00077">
    <property type="entry name" value="HDc"/>
    <property type="match status" value="1"/>
</dbReference>
<dbReference type="CDD" id="cd05401">
    <property type="entry name" value="NT_GlnE_GlnD_like"/>
    <property type="match status" value="1"/>
</dbReference>
<dbReference type="Gene3D" id="3.30.70.260">
    <property type="match status" value="1"/>
</dbReference>
<dbReference type="Gene3D" id="3.30.460.10">
    <property type="entry name" value="Beta Polymerase, domain 2"/>
    <property type="match status" value="1"/>
</dbReference>
<dbReference type="Gene3D" id="1.10.3090.10">
    <property type="entry name" value="cca-adding enzyme, domain 2"/>
    <property type="match status" value="1"/>
</dbReference>
<dbReference type="HAMAP" id="MF_00277">
    <property type="entry name" value="PII_uridylyl_transf"/>
    <property type="match status" value="1"/>
</dbReference>
<dbReference type="InterPro" id="IPR045865">
    <property type="entry name" value="ACT-like_dom_sf"/>
</dbReference>
<dbReference type="InterPro" id="IPR002912">
    <property type="entry name" value="ACT_dom"/>
</dbReference>
<dbReference type="InterPro" id="IPR003607">
    <property type="entry name" value="HD/PDEase_dom"/>
</dbReference>
<dbReference type="InterPro" id="IPR006674">
    <property type="entry name" value="HD_domain"/>
</dbReference>
<dbReference type="InterPro" id="IPR043519">
    <property type="entry name" value="NT_sf"/>
</dbReference>
<dbReference type="InterPro" id="IPR013546">
    <property type="entry name" value="PII_UdlTrfase/GS_AdlTrfase"/>
</dbReference>
<dbReference type="InterPro" id="IPR010043">
    <property type="entry name" value="UTase/UR"/>
</dbReference>
<dbReference type="NCBIfam" id="NF003467">
    <property type="entry name" value="PRK05092.1"/>
    <property type="match status" value="1"/>
</dbReference>
<dbReference type="NCBIfam" id="TIGR01693">
    <property type="entry name" value="UTase_glnD"/>
    <property type="match status" value="1"/>
</dbReference>
<dbReference type="PANTHER" id="PTHR47320">
    <property type="entry name" value="BIFUNCTIONAL URIDYLYLTRANSFERASE/URIDYLYL-REMOVING ENZYME"/>
    <property type="match status" value="1"/>
</dbReference>
<dbReference type="PANTHER" id="PTHR47320:SF1">
    <property type="entry name" value="BIFUNCTIONAL URIDYLYLTRANSFERASE_URIDYLYL-REMOVING ENZYME"/>
    <property type="match status" value="1"/>
</dbReference>
<dbReference type="Pfam" id="PF01842">
    <property type="entry name" value="ACT"/>
    <property type="match status" value="2"/>
</dbReference>
<dbReference type="Pfam" id="PF08335">
    <property type="entry name" value="GlnD_UR_UTase"/>
    <property type="match status" value="1"/>
</dbReference>
<dbReference type="Pfam" id="PF01966">
    <property type="entry name" value="HD"/>
    <property type="match status" value="1"/>
</dbReference>
<dbReference type="PIRSF" id="PIRSF006288">
    <property type="entry name" value="PII_uridyltransf"/>
    <property type="match status" value="1"/>
</dbReference>
<dbReference type="SMART" id="SM00471">
    <property type="entry name" value="HDc"/>
    <property type="match status" value="1"/>
</dbReference>
<dbReference type="SUPFAM" id="SSF55021">
    <property type="entry name" value="ACT-like"/>
    <property type="match status" value="2"/>
</dbReference>
<dbReference type="SUPFAM" id="SSF81301">
    <property type="entry name" value="Nucleotidyltransferase"/>
    <property type="match status" value="1"/>
</dbReference>
<dbReference type="SUPFAM" id="SSF81593">
    <property type="entry name" value="Nucleotidyltransferase substrate binding subunit/domain"/>
    <property type="match status" value="1"/>
</dbReference>
<dbReference type="SUPFAM" id="SSF81891">
    <property type="entry name" value="Poly A polymerase C-terminal region-like"/>
    <property type="match status" value="1"/>
</dbReference>
<dbReference type="PROSITE" id="PS51671">
    <property type="entry name" value="ACT"/>
    <property type="match status" value="2"/>
</dbReference>
<dbReference type="PROSITE" id="PS51831">
    <property type="entry name" value="HD"/>
    <property type="match status" value="1"/>
</dbReference>
<accession>Q57FN0</accession>
<evidence type="ECO:0000255" key="1">
    <source>
        <dbReference type="HAMAP-Rule" id="MF_00277"/>
    </source>
</evidence>
<evidence type="ECO:0000255" key="2">
    <source>
        <dbReference type="PROSITE-ProRule" id="PRU01175"/>
    </source>
</evidence>
<sequence>MSAHDLKLEEIVNAETLRRKLNELADTADESYTSLPMRKVVLQTLKDALASGRANAEDMLMKDGGGTLCAKRLCYLMDTLIDILFEFATTRAYPTRNPSKAENMALVAVGGYGRGGLAQGSDIDLLFLLPYKQTPWGEQVVEYTLYMLWDMGLKVGHSTRNIDECIRLAREDMTIRTALLDARFLTGDKDLFRTLEIRFEEEIVKGTEPEFIQAKLAERDARHRKAGETRYLVEPNVKEGKGGQRDLHTLFWITKYFYRVKTKEELVKLGVLSRAELKLFNKAEDFLWAVRCHMHFATLKAEERLSFDIQPEIAQRLGYTAHPGQNYVERFMKHYFLVAKDVGDLTRIICAALEEQQAKHVPGFNRIFLTFSRRKRKLSDDGAFISENHRINIARPDIFRQDPVNMIRLFHLADRHGLEFHPEAMQSLTRSLKLINADLRENPEANRLFLEILTSPRNPELILRRMNESGVLGKFIPDFGKIVAMMQFNMYHHYTVDEHLLRCIAVLSEIEHGELKTEHPLSNHLITTIKRDRNLLYVTLLLHDIAKGRPEDHSIAGARIARRLCPRFGLTPSETETVEWLVREHLTMSMVAQSRDLNDRKTIIDFADTVQTMERLKLLLILTVCDIKAVGPGIWNGWKGQLLRTLFYETELVLTGGFSELSRAARDKQAREALAERLSDWPKEERDAYLALPYTNYFLTVSLDDQVRHAHFIRDADQQGRALVTMAKPHAFEAVTEITVLAPDHPRLLSVITGACAAAGGNIVDAQIFTTSDGRALDTILISREFDTDDDERRRAERVGKVIEDVLSGKAHLPDMLAKRTKPKKAARAFKVEPRVEINNTLSNKFTVIEVEGLDRPGLLSELTGLISDLSLDIASAHITTFGEKVIDSFYVTDLVGHKISNATRQGNIKRKLLALLGAENGARTNGRSPQAAA</sequence>